<reference key="1">
    <citation type="submission" date="2008-02" db="EMBL/GenBank/DDBJ databases">
        <title>Complete sequence of Yersinia pseudotuberculosis YPIII.</title>
        <authorList>
            <consortium name="US DOE Joint Genome Institute"/>
            <person name="Copeland A."/>
            <person name="Lucas S."/>
            <person name="Lapidus A."/>
            <person name="Glavina del Rio T."/>
            <person name="Dalin E."/>
            <person name="Tice H."/>
            <person name="Bruce D."/>
            <person name="Goodwin L."/>
            <person name="Pitluck S."/>
            <person name="Munk A.C."/>
            <person name="Brettin T."/>
            <person name="Detter J.C."/>
            <person name="Han C."/>
            <person name="Tapia R."/>
            <person name="Schmutz J."/>
            <person name="Larimer F."/>
            <person name="Land M."/>
            <person name="Hauser L."/>
            <person name="Challacombe J.F."/>
            <person name="Green L."/>
            <person name="Lindler L.E."/>
            <person name="Nikolich M.P."/>
            <person name="Richardson P."/>
        </authorList>
    </citation>
    <scope>NUCLEOTIDE SEQUENCE [LARGE SCALE GENOMIC DNA]</scope>
    <source>
        <strain>YPIII</strain>
    </source>
</reference>
<accession>B1JLY0</accession>
<organism>
    <name type="scientific">Yersinia pseudotuberculosis serotype O:3 (strain YPIII)</name>
    <dbReference type="NCBI Taxonomy" id="502800"/>
    <lineage>
        <taxon>Bacteria</taxon>
        <taxon>Pseudomonadati</taxon>
        <taxon>Pseudomonadota</taxon>
        <taxon>Gammaproteobacteria</taxon>
        <taxon>Enterobacterales</taxon>
        <taxon>Yersiniaceae</taxon>
        <taxon>Yersinia</taxon>
    </lineage>
</organism>
<feature type="chain" id="PRO_1000093849" description="Translation initiation factor IF-2">
    <location>
        <begin position="1"/>
        <end position="892"/>
    </location>
</feature>
<feature type="domain" description="tr-type G">
    <location>
        <begin position="391"/>
        <end position="560"/>
    </location>
</feature>
<feature type="region of interest" description="Disordered" evidence="3">
    <location>
        <begin position="65"/>
        <end position="296"/>
    </location>
</feature>
<feature type="region of interest" description="G1" evidence="1">
    <location>
        <begin position="400"/>
        <end position="407"/>
    </location>
</feature>
<feature type="region of interest" description="G2" evidence="1">
    <location>
        <begin position="425"/>
        <end position="429"/>
    </location>
</feature>
<feature type="region of interest" description="G3" evidence="1">
    <location>
        <begin position="446"/>
        <end position="449"/>
    </location>
</feature>
<feature type="region of interest" description="G4" evidence="1">
    <location>
        <begin position="500"/>
        <end position="503"/>
    </location>
</feature>
<feature type="region of interest" description="G5" evidence="1">
    <location>
        <begin position="536"/>
        <end position="538"/>
    </location>
</feature>
<feature type="compositionally biased region" description="Polar residues" evidence="3">
    <location>
        <begin position="68"/>
        <end position="82"/>
    </location>
</feature>
<feature type="compositionally biased region" description="Basic and acidic residues" evidence="3">
    <location>
        <begin position="99"/>
        <end position="217"/>
    </location>
</feature>
<feature type="compositionally biased region" description="Polar residues" evidence="3">
    <location>
        <begin position="224"/>
        <end position="237"/>
    </location>
</feature>
<feature type="compositionally biased region" description="Basic and acidic residues" evidence="3">
    <location>
        <begin position="239"/>
        <end position="254"/>
    </location>
</feature>
<feature type="compositionally biased region" description="Basic residues" evidence="3">
    <location>
        <begin position="255"/>
        <end position="269"/>
    </location>
</feature>
<feature type="compositionally biased region" description="Basic and acidic residues" evidence="3">
    <location>
        <begin position="270"/>
        <end position="283"/>
    </location>
</feature>
<feature type="binding site" evidence="2">
    <location>
        <begin position="400"/>
        <end position="407"/>
    </location>
    <ligand>
        <name>GTP</name>
        <dbReference type="ChEBI" id="CHEBI:37565"/>
    </ligand>
</feature>
<feature type="binding site" evidence="2">
    <location>
        <begin position="446"/>
        <end position="450"/>
    </location>
    <ligand>
        <name>GTP</name>
        <dbReference type="ChEBI" id="CHEBI:37565"/>
    </ligand>
</feature>
<feature type="binding site" evidence="2">
    <location>
        <begin position="500"/>
        <end position="503"/>
    </location>
    <ligand>
        <name>GTP</name>
        <dbReference type="ChEBI" id="CHEBI:37565"/>
    </ligand>
</feature>
<keyword id="KW-0963">Cytoplasm</keyword>
<keyword id="KW-0342">GTP-binding</keyword>
<keyword id="KW-0396">Initiation factor</keyword>
<keyword id="KW-0547">Nucleotide-binding</keyword>
<keyword id="KW-0648">Protein biosynthesis</keyword>
<sequence length="892" mass="97567">MTDVTVKSLAAEIQTPVDRLVQQFADAGIKKSDVDSVTQQEKEILLAHLNREHGSVPNKLTLQRKTRSTLNIPSTGGKSKSVQIEVRKKRTYVNTPEAEQAKAEEQAQREAEEQAQREAEATAQKIAEEKAKREAEEQAKREAAEKAKRQAAEKEKVTNQQTDEKTKPAQTDKARREAEAAELKRSVEEETRRKVEEDAKRVAEEARKMAAENEGKWPEPVAEQTESADYHVTTSQHARAAEDENDAKVEGDRRSRTRGGKATKQKKGNKLSESKADREEARAVGRKGKRKPSTLQQSFNKPVVAVNRDVVIGETVTVAELANKMAVKGSQVIKAMMKLGAMATINQVIDQETAQLVAEEMGHKVILRRENELEEALMSDRDIGVEAAAEHRAPVVTIMGHVDHGKTSLLDYIRSTKVASGEAGGITQHIGAYHVETENGMITFLDTPGHAAFTSMRARGAQATDIVVLVVAADDGVMPQTIEAIQHAKAANVPVVVAVNKIDKPEADPDRVKTELSQYGIQPEEWGGESQFINVSAKAGIGIDELLNAILLQAEVLELKAVRTGMANGVVIESFLDKGRGPVATVLVQQGTLNKGDIVLCGFEYGRVRAMRDELGRDITSAGPSIPVEILGLSSVPAAGDEVTVVRDEKKAREVALYRQGKFREVKLARQQKSKLENMFANMTEGEVSELNIVIKSDVQGSCEAICDSLEKLSTDEVKVRIVGSGVGGITETDATLAAASGAIILGFNVRADASARRVVETEGLDLRYYSVIYSLIDEVKQAMSGMLAPEYKQQIIGLAEVRDVFKSPKFGAIAGCMVTEGVIKRNNPIRVLRDNVVIYEGELESLRRFKDDVSEVRNGMECGIGVKNYNDVRTGDVIEVFEIIEIKRTIA</sequence>
<dbReference type="EMBL" id="CP000950">
    <property type="protein sequence ID" value="ACA69997.1"/>
    <property type="molecule type" value="Genomic_DNA"/>
</dbReference>
<dbReference type="RefSeq" id="WP_002223151.1">
    <property type="nucleotide sequence ID" value="NZ_CP009792.1"/>
</dbReference>
<dbReference type="SMR" id="B1JLY0"/>
<dbReference type="GeneID" id="49787518"/>
<dbReference type="KEGG" id="ypy:YPK_3730"/>
<dbReference type="PATRIC" id="fig|502800.11.peg.78"/>
<dbReference type="GO" id="GO:0005829">
    <property type="term" value="C:cytosol"/>
    <property type="evidence" value="ECO:0007669"/>
    <property type="project" value="TreeGrafter"/>
</dbReference>
<dbReference type="GO" id="GO:0005525">
    <property type="term" value="F:GTP binding"/>
    <property type="evidence" value="ECO:0007669"/>
    <property type="project" value="UniProtKB-KW"/>
</dbReference>
<dbReference type="GO" id="GO:0003924">
    <property type="term" value="F:GTPase activity"/>
    <property type="evidence" value="ECO:0007669"/>
    <property type="project" value="UniProtKB-UniRule"/>
</dbReference>
<dbReference type="GO" id="GO:0097216">
    <property type="term" value="F:guanosine tetraphosphate binding"/>
    <property type="evidence" value="ECO:0007669"/>
    <property type="project" value="UniProtKB-ARBA"/>
</dbReference>
<dbReference type="GO" id="GO:0003743">
    <property type="term" value="F:translation initiation factor activity"/>
    <property type="evidence" value="ECO:0007669"/>
    <property type="project" value="UniProtKB-UniRule"/>
</dbReference>
<dbReference type="CDD" id="cd01887">
    <property type="entry name" value="IF2_eIF5B"/>
    <property type="match status" value="1"/>
</dbReference>
<dbReference type="CDD" id="cd03702">
    <property type="entry name" value="IF2_mtIF2_II"/>
    <property type="match status" value="1"/>
</dbReference>
<dbReference type="CDD" id="cd03692">
    <property type="entry name" value="mtIF2_IVc"/>
    <property type="match status" value="1"/>
</dbReference>
<dbReference type="FunFam" id="2.40.30.10:FF:000007">
    <property type="entry name" value="Translation initiation factor IF-2"/>
    <property type="match status" value="1"/>
</dbReference>
<dbReference type="FunFam" id="2.40.30.10:FF:000008">
    <property type="entry name" value="Translation initiation factor IF-2"/>
    <property type="match status" value="1"/>
</dbReference>
<dbReference type="FunFam" id="3.30.56.50:FF:000001">
    <property type="entry name" value="Translation initiation factor IF-2"/>
    <property type="match status" value="1"/>
</dbReference>
<dbReference type="FunFam" id="3.40.50.10050:FF:000001">
    <property type="entry name" value="Translation initiation factor IF-2"/>
    <property type="match status" value="1"/>
</dbReference>
<dbReference type="FunFam" id="3.40.50.300:FF:000019">
    <property type="entry name" value="Translation initiation factor IF-2"/>
    <property type="match status" value="1"/>
</dbReference>
<dbReference type="Gene3D" id="3.40.50.300">
    <property type="entry name" value="P-loop containing nucleotide triphosphate hydrolases"/>
    <property type="match status" value="1"/>
</dbReference>
<dbReference type="Gene3D" id="3.30.56.50">
    <property type="entry name" value="Putative DNA-binding domain, N-terminal subdomain of bacterial translation initiation factor IF2"/>
    <property type="match status" value="1"/>
</dbReference>
<dbReference type="Gene3D" id="2.40.30.10">
    <property type="entry name" value="Translation factors"/>
    <property type="match status" value="2"/>
</dbReference>
<dbReference type="Gene3D" id="3.40.50.10050">
    <property type="entry name" value="Translation initiation factor IF- 2, domain 3"/>
    <property type="match status" value="1"/>
</dbReference>
<dbReference type="HAMAP" id="MF_00100_B">
    <property type="entry name" value="IF_2_B"/>
    <property type="match status" value="1"/>
</dbReference>
<dbReference type="InterPro" id="IPR009061">
    <property type="entry name" value="DNA-bd_dom_put_sf"/>
</dbReference>
<dbReference type="InterPro" id="IPR053905">
    <property type="entry name" value="EF-G-like_DII"/>
</dbReference>
<dbReference type="InterPro" id="IPR004161">
    <property type="entry name" value="EFTu-like_2"/>
</dbReference>
<dbReference type="InterPro" id="IPR013575">
    <property type="entry name" value="IF2_assoc_dom_bac"/>
</dbReference>
<dbReference type="InterPro" id="IPR044145">
    <property type="entry name" value="IF2_II"/>
</dbReference>
<dbReference type="InterPro" id="IPR006847">
    <property type="entry name" value="IF2_N"/>
</dbReference>
<dbReference type="InterPro" id="IPR027417">
    <property type="entry name" value="P-loop_NTPase"/>
</dbReference>
<dbReference type="InterPro" id="IPR005225">
    <property type="entry name" value="Small_GTP-bd"/>
</dbReference>
<dbReference type="InterPro" id="IPR000795">
    <property type="entry name" value="T_Tr_GTP-bd_dom"/>
</dbReference>
<dbReference type="InterPro" id="IPR000178">
    <property type="entry name" value="TF_IF2_bacterial-like"/>
</dbReference>
<dbReference type="InterPro" id="IPR015760">
    <property type="entry name" value="TIF_IF2"/>
</dbReference>
<dbReference type="InterPro" id="IPR023115">
    <property type="entry name" value="TIF_IF2_dom3"/>
</dbReference>
<dbReference type="InterPro" id="IPR036925">
    <property type="entry name" value="TIF_IF2_dom3_sf"/>
</dbReference>
<dbReference type="InterPro" id="IPR009000">
    <property type="entry name" value="Transl_B-barrel_sf"/>
</dbReference>
<dbReference type="NCBIfam" id="TIGR00487">
    <property type="entry name" value="IF-2"/>
    <property type="match status" value="1"/>
</dbReference>
<dbReference type="NCBIfam" id="TIGR00231">
    <property type="entry name" value="small_GTP"/>
    <property type="match status" value="1"/>
</dbReference>
<dbReference type="PANTHER" id="PTHR43381:SF5">
    <property type="entry name" value="TR-TYPE G DOMAIN-CONTAINING PROTEIN"/>
    <property type="match status" value="1"/>
</dbReference>
<dbReference type="PANTHER" id="PTHR43381">
    <property type="entry name" value="TRANSLATION INITIATION FACTOR IF-2-RELATED"/>
    <property type="match status" value="1"/>
</dbReference>
<dbReference type="Pfam" id="PF22042">
    <property type="entry name" value="EF-G_D2"/>
    <property type="match status" value="1"/>
</dbReference>
<dbReference type="Pfam" id="PF00009">
    <property type="entry name" value="GTP_EFTU"/>
    <property type="match status" value="1"/>
</dbReference>
<dbReference type="Pfam" id="PF03144">
    <property type="entry name" value="GTP_EFTU_D2"/>
    <property type="match status" value="1"/>
</dbReference>
<dbReference type="Pfam" id="PF11987">
    <property type="entry name" value="IF-2"/>
    <property type="match status" value="1"/>
</dbReference>
<dbReference type="Pfam" id="PF08364">
    <property type="entry name" value="IF2_assoc"/>
    <property type="match status" value="1"/>
</dbReference>
<dbReference type="Pfam" id="PF04760">
    <property type="entry name" value="IF2_N"/>
    <property type="match status" value="2"/>
</dbReference>
<dbReference type="SUPFAM" id="SSF52156">
    <property type="entry name" value="Initiation factor IF2/eIF5b, domain 3"/>
    <property type="match status" value="1"/>
</dbReference>
<dbReference type="SUPFAM" id="SSF52540">
    <property type="entry name" value="P-loop containing nucleoside triphosphate hydrolases"/>
    <property type="match status" value="1"/>
</dbReference>
<dbReference type="SUPFAM" id="SSF46955">
    <property type="entry name" value="Putative DNA-binding domain"/>
    <property type="match status" value="1"/>
</dbReference>
<dbReference type="SUPFAM" id="SSF50447">
    <property type="entry name" value="Translation proteins"/>
    <property type="match status" value="2"/>
</dbReference>
<dbReference type="PROSITE" id="PS51722">
    <property type="entry name" value="G_TR_2"/>
    <property type="match status" value="1"/>
</dbReference>
<dbReference type="PROSITE" id="PS01176">
    <property type="entry name" value="IF2"/>
    <property type="match status" value="1"/>
</dbReference>
<evidence type="ECO:0000250" key="1"/>
<evidence type="ECO:0000255" key="2">
    <source>
        <dbReference type="HAMAP-Rule" id="MF_00100"/>
    </source>
</evidence>
<evidence type="ECO:0000256" key="3">
    <source>
        <dbReference type="SAM" id="MobiDB-lite"/>
    </source>
</evidence>
<protein>
    <recommendedName>
        <fullName evidence="2">Translation initiation factor IF-2</fullName>
    </recommendedName>
</protein>
<name>IF2_YERPY</name>
<gene>
    <name evidence="2" type="primary">infB</name>
    <name type="ordered locus">YPK_3730</name>
</gene>
<comment type="function">
    <text evidence="2">One of the essential components for the initiation of protein synthesis. Protects formylmethionyl-tRNA from spontaneous hydrolysis and promotes its binding to the 30S ribosomal subunits. Also involved in the hydrolysis of GTP during the formation of the 70S ribosomal complex.</text>
</comment>
<comment type="subcellular location">
    <subcellularLocation>
        <location evidence="2">Cytoplasm</location>
    </subcellularLocation>
</comment>
<comment type="similarity">
    <text evidence="2">Belongs to the TRAFAC class translation factor GTPase superfamily. Classic translation factor GTPase family. IF-2 subfamily.</text>
</comment>
<proteinExistence type="inferred from homology"/>